<sequence>MPLSYPHFRKLLLLDDEAGLLEEELPRLADEGLNRRVAEDLNLQLPNVSIPWTHKVGNFTGLYSSTVPTFNPDWLTPSFPDIHLHQDLIHKCEQFVGPLTKNELRRLKLVMPSRFFPKVTKYFPMEKGIKPYYPDNVVNHYFKTRHYLHTLWKAGILYKRESTRSASFCGSPYSWEQELQHGSTSINDTKGHGTESLCTQSSGILSRPSAGSSIQGKFQQSRLGLQQKQGQLANGKQGRSGRIRSWVHTPTRWPAGVEPTGTGCAYNIASRSASCFHQSAVREKTNPSLSTSKRHSSTGHAVELNPVPPGSVRSEGKGSVLSCWWLQFRDTEPCSDYCLSHIINLLEDWGPCYEHGQHHIRTPRTPARVTGGVFLVDKNPHNTTESRLVVDFSQFSRGNTRVSWPKFAVPNLQSLTNLLSSNLSWLSLDVSAAFYHLPLHPAAMPHLLVGSSGLSRYVARLSSTSRIHDHQHGTMQNLHNSCSRNLYVSLLLLFKTFGRKLHLYSHPIILGFRKIPMGVGLSPFLLAQFTSAICSVVRRAFPHCLAFSYMDDLVLGAKSVQHLESLYTAVTNFLLSVGIHLNTSKTKRWGYTLNFMGYVIGSWGSLPQDHIVQKIKACFRKLPVNRPIDWKVCQRIVGLLGFAAPFTQCGYPALMPLYACITAKQAFVFSPTYKAFLCQQYMHLYPVARQRPGLCQVFADATPTGWGLAIGHQRMRGTFVAPLPIHTAELLAACFARSRSGAKLIGTDNSVVLSRKYTSFPWLLGCAANWILRGTSFVYVPSALNPADDPSRGRLGLYRPLLRLPFQPTTGRTSLYAASPSVPSHLPDRVHFASPLHVAWRPP</sequence>
<feature type="chain" id="PRO_0000323274" description="Protein P">
    <location>
        <begin position="1"/>
        <end position="843"/>
    </location>
</feature>
<feature type="domain" description="Reverse transcriptase" evidence="1">
    <location>
        <begin position="357"/>
        <end position="600"/>
    </location>
</feature>
<feature type="region of interest" description="Terminal protein domain (TP)" evidence="1">
    <location>
        <begin position="1"/>
        <end position="177"/>
    </location>
</feature>
<feature type="region of interest" description="Spacer" evidence="1">
    <location>
        <begin position="178"/>
        <end position="346"/>
    </location>
</feature>
<feature type="region of interest" description="Disordered" evidence="2">
    <location>
        <begin position="180"/>
        <end position="221"/>
    </location>
</feature>
<feature type="region of interest" description="Disordered" evidence="2">
    <location>
        <begin position="282"/>
        <end position="313"/>
    </location>
</feature>
<feature type="region of interest" description="Polymerase/reverse transcriptase domain (RT)" evidence="1">
    <location>
        <begin position="347"/>
        <end position="690"/>
    </location>
</feature>
<feature type="compositionally biased region" description="Polar residues" evidence="2">
    <location>
        <begin position="196"/>
        <end position="221"/>
    </location>
</feature>
<feature type="binding site" evidence="1">
    <location>
        <position position="429"/>
    </location>
    <ligand>
        <name>Mg(2+)</name>
        <dbReference type="ChEBI" id="CHEBI:18420"/>
        <note>catalytic</note>
    </ligand>
</feature>
<feature type="binding site" evidence="1">
    <location>
        <position position="551"/>
    </location>
    <ligand>
        <name>Mg(2+)</name>
        <dbReference type="ChEBI" id="CHEBI:18420"/>
        <note>catalytic</note>
    </ligand>
</feature>
<feature type="binding site" evidence="1">
    <location>
        <position position="552"/>
    </location>
    <ligand>
        <name>Mg(2+)</name>
        <dbReference type="ChEBI" id="CHEBI:18420"/>
        <note>catalytic</note>
    </ligand>
</feature>
<feature type="site" description="Priming of reverse-transcription by covalently linking the first nucleotide of the (-)DNA" evidence="1">
    <location>
        <position position="63"/>
    </location>
</feature>
<organismHost>
    <name type="scientific">Homo sapiens</name>
    <name type="common">Human</name>
    <dbReference type="NCBI Taxonomy" id="9606"/>
</organismHost>
<organismHost>
    <name type="scientific">Pan troglodytes</name>
    <name type="common">Chimpanzee</name>
    <dbReference type="NCBI Taxonomy" id="9598"/>
</organismHost>
<protein>
    <recommendedName>
        <fullName evidence="1">Protein P</fullName>
    </recommendedName>
    <domain>
        <recommendedName>
            <fullName evidence="1">DNA-directed DNA polymerase</fullName>
            <ecNumber evidence="1">2.7.7.7</ecNumber>
        </recommendedName>
    </domain>
    <domain>
        <recommendedName>
            <fullName evidence="1">RNA-directed DNA polymerase</fullName>
            <ecNumber evidence="1">2.7.7.49</ecNumber>
        </recommendedName>
    </domain>
    <domain>
        <recommendedName>
            <fullName evidence="1">Ribonuclease H</fullName>
            <ecNumber evidence="1">3.1.26.4</ecNumber>
        </recommendedName>
    </domain>
</protein>
<keyword id="KW-0235">DNA replication</keyword>
<keyword id="KW-0238">DNA-binding</keyword>
<keyword id="KW-0239">DNA-directed DNA polymerase</keyword>
<keyword id="KW-0255">Endonuclease</keyword>
<keyword id="KW-0945">Host-virus interaction</keyword>
<keyword id="KW-0378">Hydrolase</keyword>
<keyword id="KW-1090">Inhibition of host innate immune response by virus</keyword>
<keyword id="KW-1113">Inhibition of host RLR pathway by virus</keyword>
<keyword id="KW-0460">Magnesium</keyword>
<keyword id="KW-0479">Metal-binding</keyword>
<keyword id="KW-0511">Multifunctional enzyme</keyword>
<keyword id="KW-0540">Nuclease</keyword>
<keyword id="KW-0548">Nucleotidyltransferase</keyword>
<keyword id="KW-0695">RNA-directed DNA polymerase</keyword>
<keyword id="KW-0808">Transferase</keyword>
<keyword id="KW-0899">Viral immunoevasion</keyword>
<name>DPOL_HBVF2</name>
<evidence type="ECO:0000255" key="1">
    <source>
        <dbReference type="HAMAP-Rule" id="MF_04073"/>
    </source>
</evidence>
<evidence type="ECO:0000256" key="2">
    <source>
        <dbReference type="SAM" id="MobiDB-lite"/>
    </source>
</evidence>
<gene>
    <name evidence="1" type="primary">P</name>
</gene>
<dbReference type="EC" id="2.7.7.7" evidence="1"/>
<dbReference type="EC" id="2.7.7.49" evidence="1"/>
<dbReference type="EC" id="3.1.26.4" evidence="1"/>
<dbReference type="EMBL" id="AY090461">
    <property type="protein sequence ID" value="AAM09069.1"/>
    <property type="molecule type" value="Genomic_DNA"/>
</dbReference>
<dbReference type="Proteomes" id="UP000001799">
    <property type="component" value="Genome"/>
</dbReference>
<dbReference type="GO" id="GO:0003677">
    <property type="term" value="F:DNA binding"/>
    <property type="evidence" value="ECO:0007669"/>
    <property type="project" value="UniProtKB-UniRule"/>
</dbReference>
<dbReference type="GO" id="GO:0003887">
    <property type="term" value="F:DNA-directed DNA polymerase activity"/>
    <property type="evidence" value="ECO:0007669"/>
    <property type="project" value="UniProtKB-UniRule"/>
</dbReference>
<dbReference type="GO" id="GO:0046872">
    <property type="term" value="F:metal ion binding"/>
    <property type="evidence" value="ECO:0007669"/>
    <property type="project" value="UniProtKB-UniRule"/>
</dbReference>
<dbReference type="GO" id="GO:0003964">
    <property type="term" value="F:RNA-directed DNA polymerase activity"/>
    <property type="evidence" value="ECO:0007669"/>
    <property type="project" value="UniProtKB-UniRule"/>
</dbReference>
<dbReference type="GO" id="GO:0004523">
    <property type="term" value="F:RNA-DNA hybrid ribonuclease activity"/>
    <property type="evidence" value="ECO:0007669"/>
    <property type="project" value="UniProtKB-UniRule"/>
</dbReference>
<dbReference type="GO" id="GO:0006260">
    <property type="term" value="P:DNA replication"/>
    <property type="evidence" value="ECO:0007669"/>
    <property type="project" value="UniProtKB-UniRule"/>
</dbReference>
<dbReference type="GO" id="GO:0052170">
    <property type="term" value="P:symbiont-mediated suppression of host innate immune response"/>
    <property type="evidence" value="ECO:0007669"/>
    <property type="project" value="UniProtKB-UniRule"/>
</dbReference>
<dbReference type="FunFam" id="3.30.70.270:FF:000009">
    <property type="entry name" value="Protein P"/>
    <property type="match status" value="1"/>
</dbReference>
<dbReference type="Gene3D" id="3.30.70.270">
    <property type="match status" value="1"/>
</dbReference>
<dbReference type="HAMAP" id="MF_04073">
    <property type="entry name" value="HBV_DPOL"/>
    <property type="match status" value="1"/>
</dbReference>
<dbReference type="InterPro" id="IPR043502">
    <property type="entry name" value="DNA/RNA_pol_sf"/>
</dbReference>
<dbReference type="InterPro" id="IPR001462">
    <property type="entry name" value="DNApol_viral_C"/>
</dbReference>
<dbReference type="InterPro" id="IPR000201">
    <property type="entry name" value="DNApol_viral_N"/>
</dbReference>
<dbReference type="InterPro" id="IPR037531">
    <property type="entry name" value="HBV_DPOL"/>
</dbReference>
<dbReference type="InterPro" id="IPR043128">
    <property type="entry name" value="Rev_trsase/Diguanyl_cyclase"/>
</dbReference>
<dbReference type="InterPro" id="IPR000477">
    <property type="entry name" value="RT_dom"/>
</dbReference>
<dbReference type="InterPro" id="IPR051320">
    <property type="entry name" value="Viral_Replic_Matur_Polypro"/>
</dbReference>
<dbReference type="PANTHER" id="PTHR33064:SF29">
    <property type="entry name" value="PEPTIDASE A2 DOMAIN-CONTAINING PROTEIN-RELATED"/>
    <property type="match status" value="1"/>
</dbReference>
<dbReference type="PANTHER" id="PTHR33064">
    <property type="entry name" value="POL PROTEIN"/>
    <property type="match status" value="1"/>
</dbReference>
<dbReference type="Pfam" id="PF00336">
    <property type="entry name" value="DNA_pol_viral_C"/>
    <property type="match status" value="1"/>
</dbReference>
<dbReference type="Pfam" id="PF00242">
    <property type="entry name" value="DNA_pol_viral_N"/>
    <property type="match status" value="1"/>
</dbReference>
<dbReference type="Pfam" id="PF00078">
    <property type="entry name" value="RVT_1"/>
    <property type="match status" value="1"/>
</dbReference>
<dbReference type="SUPFAM" id="SSF56672">
    <property type="entry name" value="DNA/RNA polymerases"/>
    <property type="match status" value="1"/>
</dbReference>
<dbReference type="PROSITE" id="PS50878">
    <property type="entry name" value="RT_POL"/>
    <property type="match status" value="1"/>
</dbReference>
<reference key="1">
    <citation type="journal article" date="2002" name="J. Gen. Virol.">
        <title>Genotype H: a new Amerindian genotype of hepatitis B virus revealed in Central America.</title>
        <authorList>
            <person name="Arauz-Ruiz P."/>
            <person name="Norder H."/>
            <person name="Robertson B.H."/>
            <person name="Magnius L.O."/>
        </authorList>
    </citation>
    <scope>NUCLEOTIDE SEQUENCE [GENOMIC DNA]</scope>
</reference>
<reference key="2">
    <citation type="journal article" date="2007" name="World J. Gastroenterol.">
        <title>Hepatitis B virus replication.</title>
        <authorList>
            <person name="Beck J."/>
            <person name="Nassal M."/>
        </authorList>
    </citation>
    <scope>REVIEW</scope>
</reference>
<proteinExistence type="inferred from homology"/>
<accession>Q8JMY4</accession>
<organism>
    <name type="scientific">Hepatitis B virus genotype F1 subtype adw4 (isolate El Salvador/1116Sal/1997)</name>
    <name type="common">HBV-F</name>
    <dbReference type="NCBI Taxonomy" id="489499"/>
    <lineage>
        <taxon>Viruses</taxon>
        <taxon>Riboviria</taxon>
        <taxon>Pararnavirae</taxon>
        <taxon>Artverviricota</taxon>
        <taxon>Revtraviricetes</taxon>
        <taxon>Blubervirales</taxon>
        <taxon>Hepadnaviridae</taxon>
        <taxon>Orthohepadnavirus</taxon>
        <taxon>Hepatitis B virus</taxon>
        <taxon>hepatitis B virus genotype F</taxon>
    </lineage>
</organism>
<comment type="function">
    <text evidence="1">Multifunctional enzyme that converts the viral RNA genome into dsDNA in viral cytoplasmic capsids. This enzyme displays a DNA polymerase activity that can copy either DNA or RNA templates, and a ribonuclease H (RNase H) activity that cleaves the RNA strand of RNA-DNA heteroduplexes in a partially processive 3'- to 5'-endonucleasic mode. Neo-synthesized pregenomic RNA (pgRNA) are encapsidated together with the P protein, and reverse-transcribed inside the nucleocapsid. Initiation of reverse-transcription occurs first by binding the epsilon loop on the pgRNA genome, and is initiated by protein priming, thereby the 5'-end of (-)DNA is covalently linked to P protein. Partial (+)DNA is synthesized from the (-)DNA template and generates the relaxed circular DNA (RC-DNA) genome. After budding and infection, the RC-DNA migrates in the nucleus, and is converted into a plasmid-like covalently closed circular DNA (cccDNA). The activity of P protein does not seem to be necessary for cccDNA generation, and is presumably released from (+)DNA by host nuclear DNA repair machinery.</text>
</comment>
<comment type="catalytic activity">
    <reaction evidence="1">
        <text>DNA(n) + a 2'-deoxyribonucleoside 5'-triphosphate = DNA(n+1) + diphosphate</text>
        <dbReference type="Rhea" id="RHEA:22508"/>
        <dbReference type="Rhea" id="RHEA-COMP:17339"/>
        <dbReference type="Rhea" id="RHEA-COMP:17340"/>
        <dbReference type="ChEBI" id="CHEBI:33019"/>
        <dbReference type="ChEBI" id="CHEBI:61560"/>
        <dbReference type="ChEBI" id="CHEBI:173112"/>
        <dbReference type="EC" id="2.7.7.7"/>
    </reaction>
</comment>
<comment type="catalytic activity">
    <reaction evidence="1">
        <text>DNA(n) + a 2'-deoxyribonucleoside 5'-triphosphate = DNA(n+1) + diphosphate</text>
        <dbReference type="Rhea" id="RHEA:22508"/>
        <dbReference type="Rhea" id="RHEA-COMP:17339"/>
        <dbReference type="Rhea" id="RHEA-COMP:17340"/>
        <dbReference type="ChEBI" id="CHEBI:33019"/>
        <dbReference type="ChEBI" id="CHEBI:61560"/>
        <dbReference type="ChEBI" id="CHEBI:173112"/>
        <dbReference type="EC" id="2.7.7.49"/>
    </reaction>
</comment>
<comment type="catalytic activity">
    <reaction evidence="1">
        <text>Endonucleolytic cleavage to 5'-phosphomonoester.</text>
        <dbReference type="EC" id="3.1.26.4"/>
    </reaction>
</comment>
<comment type="activity regulation">
    <text evidence="1">Activated by host HSP70 and HSP40 in vitro to be able to bind the epsilon loop of the pgRNA. Because deletion of the RNase H region renders the protein partly chaperone-independent, the chaperones may be needed indirectly to relieve occlusion of the RNA-binding site by this domain. Inhibited by several reverse-transcriptase inhibitors: Lamivudine, Adefovir and Entecavir.</text>
</comment>
<comment type="domain">
    <text evidence="1">Terminal protein domain (TP) is hepadnavirus-specific. Spacer domain is highly variable and separates the TP and RT domains. Polymerase/reverse-transcriptase domain (RT) and ribonuclease H domain (RH) are similar to retrovirus reverse transcriptase/RNase H.</text>
</comment>
<comment type="domain">
    <text evidence="1">The polymerase/reverse transcriptase (RT) and ribonuclease H (RH) domains are structured in five subdomains: finger, palm, thumb, connection and RNase H. Within the palm subdomain, the 'primer grip' region is thought to be involved in the positioning of the primer terminus for accommodating the incoming nucleotide. The RH domain stabilizes the association of RT with primer-template.</text>
</comment>
<comment type="miscellaneous">
    <text evidence="1">Hepadnaviral virions contain probably just one P protein molecule per particle.</text>
</comment>
<comment type="similarity">
    <text evidence="1">Belongs to the hepadnaviridae P protein family.</text>
</comment>